<feature type="chain" id="PRO_1000064705" description="Ribosome maturation factor RimP">
    <location>
        <begin position="1"/>
        <end position="153"/>
    </location>
</feature>
<comment type="function">
    <text evidence="1">Required for maturation of 30S ribosomal subunits.</text>
</comment>
<comment type="subcellular location">
    <subcellularLocation>
        <location evidence="1">Cytoplasm</location>
    </subcellularLocation>
</comment>
<comment type="similarity">
    <text evidence="1">Belongs to the RimP family.</text>
</comment>
<sequence>MKKNLEATIEEIVTKITDEHGFEMVDVEYVKEAGEYYLRVYIDKEEGISLNECELVSRELSPILDEKDPIKENYFLEVSSPGLDRALKKDRDFVRYQGRDVDLKLYKPLNGCKQFEGELVGLTEDNNIKIIANGKEMEFNRKDVAIVRLAIKF</sequence>
<evidence type="ECO:0000255" key="1">
    <source>
        <dbReference type="HAMAP-Rule" id="MF_01077"/>
    </source>
</evidence>
<accession>Q18BH3</accession>
<gene>
    <name evidence="1" type="primary">rimP</name>
    <name type="ordered locus">CD630_13060</name>
</gene>
<name>RIMP_CLOD6</name>
<keyword id="KW-0963">Cytoplasm</keyword>
<keyword id="KW-1185">Reference proteome</keyword>
<keyword id="KW-0690">Ribosome biogenesis</keyword>
<reference key="1">
    <citation type="journal article" date="2006" name="Nat. Genet.">
        <title>The multidrug-resistant human pathogen Clostridium difficile has a highly mobile, mosaic genome.</title>
        <authorList>
            <person name="Sebaihia M."/>
            <person name="Wren B.W."/>
            <person name="Mullany P."/>
            <person name="Fairweather N.F."/>
            <person name="Minton N."/>
            <person name="Stabler R."/>
            <person name="Thomson N.R."/>
            <person name="Roberts A.P."/>
            <person name="Cerdeno-Tarraga A.M."/>
            <person name="Wang H."/>
            <person name="Holden M.T.G."/>
            <person name="Wright A."/>
            <person name="Churcher C."/>
            <person name="Quail M.A."/>
            <person name="Baker S."/>
            <person name="Bason N."/>
            <person name="Brooks K."/>
            <person name="Chillingworth T."/>
            <person name="Cronin A."/>
            <person name="Davis P."/>
            <person name="Dowd L."/>
            <person name="Fraser A."/>
            <person name="Feltwell T."/>
            <person name="Hance Z."/>
            <person name="Holroyd S."/>
            <person name="Jagels K."/>
            <person name="Moule S."/>
            <person name="Mungall K."/>
            <person name="Price C."/>
            <person name="Rabbinowitsch E."/>
            <person name="Sharp S."/>
            <person name="Simmonds M."/>
            <person name="Stevens K."/>
            <person name="Unwin L."/>
            <person name="Whithead S."/>
            <person name="Dupuy B."/>
            <person name="Dougan G."/>
            <person name="Barrell B."/>
            <person name="Parkhill J."/>
        </authorList>
    </citation>
    <scope>NUCLEOTIDE SEQUENCE [LARGE SCALE GENOMIC DNA]</scope>
    <source>
        <strain>630</strain>
    </source>
</reference>
<protein>
    <recommendedName>
        <fullName evidence="1">Ribosome maturation factor RimP</fullName>
    </recommendedName>
</protein>
<organism>
    <name type="scientific">Clostridioides difficile (strain 630)</name>
    <name type="common">Peptoclostridium difficile</name>
    <dbReference type="NCBI Taxonomy" id="272563"/>
    <lineage>
        <taxon>Bacteria</taxon>
        <taxon>Bacillati</taxon>
        <taxon>Bacillota</taxon>
        <taxon>Clostridia</taxon>
        <taxon>Peptostreptococcales</taxon>
        <taxon>Peptostreptococcaceae</taxon>
        <taxon>Clostridioides</taxon>
    </lineage>
</organism>
<proteinExistence type="inferred from homology"/>
<dbReference type="EMBL" id="AM180355">
    <property type="protein sequence ID" value="CAJ68163.1"/>
    <property type="molecule type" value="Genomic_DNA"/>
</dbReference>
<dbReference type="RefSeq" id="WP_003438303.1">
    <property type="nucleotide sequence ID" value="NZ_JAUPES010000027.1"/>
</dbReference>
<dbReference type="RefSeq" id="YP_001087801.1">
    <property type="nucleotide sequence ID" value="NC_009089.1"/>
</dbReference>
<dbReference type="SMR" id="Q18BH3"/>
<dbReference type="STRING" id="272563.CD630_13060"/>
<dbReference type="EnsemblBacteria" id="CAJ68163">
    <property type="protein sequence ID" value="CAJ68163"/>
    <property type="gene ID" value="CD630_13060"/>
</dbReference>
<dbReference type="GeneID" id="66353708"/>
<dbReference type="KEGG" id="cdf:CD630_13060"/>
<dbReference type="KEGG" id="pdc:CDIF630_01461"/>
<dbReference type="PATRIC" id="fig|272563.120.peg.1365"/>
<dbReference type="eggNOG" id="COG0779">
    <property type="taxonomic scope" value="Bacteria"/>
</dbReference>
<dbReference type="OrthoDB" id="9805006at2"/>
<dbReference type="PhylomeDB" id="Q18BH3"/>
<dbReference type="BioCyc" id="PDIF272563:G12WB-1441-MONOMER"/>
<dbReference type="Proteomes" id="UP000001978">
    <property type="component" value="Chromosome"/>
</dbReference>
<dbReference type="GO" id="GO:0005829">
    <property type="term" value="C:cytosol"/>
    <property type="evidence" value="ECO:0007669"/>
    <property type="project" value="TreeGrafter"/>
</dbReference>
<dbReference type="GO" id="GO:0000028">
    <property type="term" value="P:ribosomal small subunit assembly"/>
    <property type="evidence" value="ECO:0007669"/>
    <property type="project" value="TreeGrafter"/>
</dbReference>
<dbReference type="GO" id="GO:0006412">
    <property type="term" value="P:translation"/>
    <property type="evidence" value="ECO:0007669"/>
    <property type="project" value="TreeGrafter"/>
</dbReference>
<dbReference type="CDD" id="cd01734">
    <property type="entry name" value="YlxS_C"/>
    <property type="match status" value="1"/>
</dbReference>
<dbReference type="FunFam" id="3.30.300.70:FF:000001">
    <property type="entry name" value="Ribosome maturation factor RimP"/>
    <property type="match status" value="1"/>
</dbReference>
<dbReference type="Gene3D" id="2.30.30.180">
    <property type="entry name" value="Ribosome maturation factor RimP, C-terminal domain"/>
    <property type="match status" value="1"/>
</dbReference>
<dbReference type="Gene3D" id="3.30.300.70">
    <property type="entry name" value="RimP-like superfamily, N-terminal"/>
    <property type="match status" value="1"/>
</dbReference>
<dbReference type="HAMAP" id="MF_01077">
    <property type="entry name" value="RimP"/>
    <property type="match status" value="1"/>
</dbReference>
<dbReference type="InterPro" id="IPR003728">
    <property type="entry name" value="Ribosome_maturation_RimP"/>
</dbReference>
<dbReference type="InterPro" id="IPR028998">
    <property type="entry name" value="RimP_C"/>
</dbReference>
<dbReference type="InterPro" id="IPR036847">
    <property type="entry name" value="RimP_C_sf"/>
</dbReference>
<dbReference type="InterPro" id="IPR028989">
    <property type="entry name" value="RimP_N"/>
</dbReference>
<dbReference type="InterPro" id="IPR035956">
    <property type="entry name" value="RimP_N_sf"/>
</dbReference>
<dbReference type="PANTHER" id="PTHR33867">
    <property type="entry name" value="RIBOSOME MATURATION FACTOR RIMP"/>
    <property type="match status" value="1"/>
</dbReference>
<dbReference type="PANTHER" id="PTHR33867:SF1">
    <property type="entry name" value="RIBOSOME MATURATION FACTOR RIMP"/>
    <property type="match status" value="1"/>
</dbReference>
<dbReference type="Pfam" id="PF17384">
    <property type="entry name" value="DUF150_C"/>
    <property type="match status" value="1"/>
</dbReference>
<dbReference type="Pfam" id="PF02576">
    <property type="entry name" value="RimP_N"/>
    <property type="match status" value="1"/>
</dbReference>
<dbReference type="SUPFAM" id="SSF74942">
    <property type="entry name" value="YhbC-like, C-terminal domain"/>
    <property type="match status" value="1"/>
</dbReference>
<dbReference type="SUPFAM" id="SSF75420">
    <property type="entry name" value="YhbC-like, N-terminal domain"/>
    <property type="match status" value="1"/>
</dbReference>